<accession>B5ETJ6</accession>
<proteinExistence type="inferred from homology"/>
<organism>
    <name type="scientific">Aliivibrio fischeri (strain MJ11)</name>
    <name type="common">Vibrio fischeri</name>
    <dbReference type="NCBI Taxonomy" id="388396"/>
    <lineage>
        <taxon>Bacteria</taxon>
        <taxon>Pseudomonadati</taxon>
        <taxon>Pseudomonadota</taxon>
        <taxon>Gammaproteobacteria</taxon>
        <taxon>Vibrionales</taxon>
        <taxon>Vibrionaceae</taxon>
        <taxon>Aliivibrio</taxon>
    </lineage>
</organism>
<dbReference type="EC" id="1.1.1.103" evidence="1"/>
<dbReference type="EMBL" id="CP001133">
    <property type="protein sequence ID" value="ACH63666.1"/>
    <property type="molecule type" value="Genomic_DNA"/>
</dbReference>
<dbReference type="RefSeq" id="WP_012534850.1">
    <property type="nucleotide sequence ID" value="NC_011186.1"/>
</dbReference>
<dbReference type="SMR" id="B5ETJ6"/>
<dbReference type="KEGG" id="vfm:VFMJ11_A0460"/>
<dbReference type="HOGENOM" id="CLU_026673_11_0_6"/>
<dbReference type="UniPathway" id="UPA00046">
    <property type="reaction ID" value="UER00505"/>
</dbReference>
<dbReference type="Proteomes" id="UP000001857">
    <property type="component" value="Chromosome II"/>
</dbReference>
<dbReference type="GO" id="GO:0005737">
    <property type="term" value="C:cytoplasm"/>
    <property type="evidence" value="ECO:0007669"/>
    <property type="project" value="UniProtKB-SubCell"/>
</dbReference>
<dbReference type="GO" id="GO:0008743">
    <property type="term" value="F:L-threonine 3-dehydrogenase activity"/>
    <property type="evidence" value="ECO:0007669"/>
    <property type="project" value="UniProtKB-UniRule"/>
</dbReference>
<dbReference type="GO" id="GO:0008270">
    <property type="term" value="F:zinc ion binding"/>
    <property type="evidence" value="ECO:0007669"/>
    <property type="project" value="UniProtKB-UniRule"/>
</dbReference>
<dbReference type="GO" id="GO:0019518">
    <property type="term" value="P:L-threonine catabolic process to glycine"/>
    <property type="evidence" value="ECO:0007669"/>
    <property type="project" value="UniProtKB-UniPathway"/>
</dbReference>
<dbReference type="Gene3D" id="3.90.180.10">
    <property type="entry name" value="Medium-chain alcohol dehydrogenases, catalytic domain"/>
    <property type="match status" value="1"/>
</dbReference>
<dbReference type="Gene3D" id="3.40.50.720">
    <property type="entry name" value="NAD(P)-binding Rossmann-like Domain"/>
    <property type="match status" value="1"/>
</dbReference>
<dbReference type="HAMAP" id="MF_00627">
    <property type="entry name" value="Thr_dehydrog"/>
    <property type="match status" value="1"/>
</dbReference>
<dbReference type="InterPro" id="IPR013149">
    <property type="entry name" value="ADH-like_C"/>
</dbReference>
<dbReference type="InterPro" id="IPR013154">
    <property type="entry name" value="ADH-like_N"/>
</dbReference>
<dbReference type="InterPro" id="IPR002328">
    <property type="entry name" value="ADH_Zn_CS"/>
</dbReference>
<dbReference type="InterPro" id="IPR011032">
    <property type="entry name" value="GroES-like_sf"/>
</dbReference>
<dbReference type="InterPro" id="IPR004627">
    <property type="entry name" value="L-Threonine_3-DHase"/>
</dbReference>
<dbReference type="InterPro" id="IPR036291">
    <property type="entry name" value="NAD(P)-bd_dom_sf"/>
</dbReference>
<dbReference type="InterPro" id="IPR020843">
    <property type="entry name" value="PKS_ER"/>
</dbReference>
<dbReference type="InterPro" id="IPR050129">
    <property type="entry name" value="Zn_alcohol_dh"/>
</dbReference>
<dbReference type="NCBIfam" id="NF003808">
    <property type="entry name" value="PRK05396.1"/>
    <property type="match status" value="1"/>
</dbReference>
<dbReference type="NCBIfam" id="TIGR00692">
    <property type="entry name" value="tdh"/>
    <property type="match status" value="1"/>
</dbReference>
<dbReference type="PANTHER" id="PTHR43401">
    <property type="entry name" value="L-THREONINE 3-DEHYDROGENASE"/>
    <property type="match status" value="1"/>
</dbReference>
<dbReference type="PANTHER" id="PTHR43401:SF2">
    <property type="entry name" value="L-THREONINE 3-DEHYDROGENASE"/>
    <property type="match status" value="1"/>
</dbReference>
<dbReference type="Pfam" id="PF08240">
    <property type="entry name" value="ADH_N"/>
    <property type="match status" value="1"/>
</dbReference>
<dbReference type="Pfam" id="PF00107">
    <property type="entry name" value="ADH_zinc_N"/>
    <property type="match status" value="1"/>
</dbReference>
<dbReference type="SMART" id="SM00829">
    <property type="entry name" value="PKS_ER"/>
    <property type="match status" value="1"/>
</dbReference>
<dbReference type="SUPFAM" id="SSF50129">
    <property type="entry name" value="GroES-like"/>
    <property type="match status" value="1"/>
</dbReference>
<dbReference type="SUPFAM" id="SSF51735">
    <property type="entry name" value="NAD(P)-binding Rossmann-fold domains"/>
    <property type="match status" value="1"/>
</dbReference>
<dbReference type="PROSITE" id="PS00059">
    <property type="entry name" value="ADH_ZINC"/>
    <property type="match status" value="1"/>
</dbReference>
<reference key="1">
    <citation type="submission" date="2008-08" db="EMBL/GenBank/DDBJ databases">
        <title>Complete sequence of Vibrio fischeri strain MJ11.</title>
        <authorList>
            <person name="Mandel M.J."/>
            <person name="Stabb E.V."/>
            <person name="Ruby E.G."/>
            <person name="Ferriera S."/>
            <person name="Johnson J."/>
            <person name="Kravitz S."/>
            <person name="Beeson K."/>
            <person name="Sutton G."/>
            <person name="Rogers Y.-H."/>
            <person name="Friedman R."/>
            <person name="Frazier M."/>
            <person name="Venter J.C."/>
        </authorList>
    </citation>
    <scope>NUCLEOTIDE SEQUENCE [LARGE SCALE GENOMIC DNA]</scope>
    <source>
        <strain>MJ11</strain>
    </source>
</reference>
<keyword id="KW-0963">Cytoplasm</keyword>
<keyword id="KW-0479">Metal-binding</keyword>
<keyword id="KW-0520">NAD</keyword>
<keyword id="KW-0560">Oxidoreductase</keyword>
<keyword id="KW-0862">Zinc</keyword>
<evidence type="ECO:0000255" key="1">
    <source>
        <dbReference type="HAMAP-Rule" id="MF_00627"/>
    </source>
</evidence>
<feature type="chain" id="PRO_1000130571" description="L-threonine 3-dehydrogenase">
    <location>
        <begin position="1"/>
        <end position="343"/>
    </location>
</feature>
<feature type="active site" description="Charge relay system" evidence="1">
    <location>
        <position position="42"/>
    </location>
</feature>
<feature type="active site" description="Charge relay system" evidence="1">
    <location>
        <position position="45"/>
    </location>
</feature>
<feature type="binding site" evidence="1">
    <location>
        <position position="40"/>
    </location>
    <ligand>
        <name>Zn(2+)</name>
        <dbReference type="ChEBI" id="CHEBI:29105"/>
        <label>1</label>
        <note>catalytic</note>
    </ligand>
</feature>
<feature type="binding site" evidence="1">
    <location>
        <position position="65"/>
    </location>
    <ligand>
        <name>Zn(2+)</name>
        <dbReference type="ChEBI" id="CHEBI:29105"/>
        <label>1</label>
        <note>catalytic</note>
    </ligand>
</feature>
<feature type="binding site" evidence="1">
    <location>
        <position position="66"/>
    </location>
    <ligand>
        <name>Zn(2+)</name>
        <dbReference type="ChEBI" id="CHEBI:29105"/>
        <label>1</label>
        <note>catalytic</note>
    </ligand>
</feature>
<feature type="binding site" evidence="1">
    <location>
        <position position="95"/>
    </location>
    <ligand>
        <name>Zn(2+)</name>
        <dbReference type="ChEBI" id="CHEBI:29105"/>
        <label>2</label>
    </ligand>
</feature>
<feature type="binding site" evidence="1">
    <location>
        <position position="98"/>
    </location>
    <ligand>
        <name>Zn(2+)</name>
        <dbReference type="ChEBI" id="CHEBI:29105"/>
        <label>2</label>
    </ligand>
</feature>
<feature type="binding site" evidence="1">
    <location>
        <position position="101"/>
    </location>
    <ligand>
        <name>Zn(2+)</name>
        <dbReference type="ChEBI" id="CHEBI:29105"/>
        <label>2</label>
    </ligand>
</feature>
<feature type="binding site" evidence="1">
    <location>
        <position position="109"/>
    </location>
    <ligand>
        <name>Zn(2+)</name>
        <dbReference type="ChEBI" id="CHEBI:29105"/>
        <label>2</label>
    </ligand>
</feature>
<feature type="binding site" evidence="1">
    <location>
        <position position="177"/>
    </location>
    <ligand>
        <name>NAD(+)</name>
        <dbReference type="ChEBI" id="CHEBI:57540"/>
    </ligand>
</feature>
<feature type="binding site" evidence="1">
    <location>
        <position position="197"/>
    </location>
    <ligand>
        <name>NAD(+)</name>
        <dbReference type="ChEBI" id="CHEBI:57540"/>
    </ligand>
</feature>
<feature type="binding site" evidence="1">
    <location>
        <position position="202"/>
    </location>
    <ligand>
        <name>NAD(+)</name>
        <dbReference type="ChEBI" id="CHEBI:57540"/>
    </ligand>
</feature>
<feature type="binding site" evidence="1">
    <location>
        <begin position="264"/>
        <end position="266"/>
    </location>
    <ligand>
        <name>NAD(+)</name>
        <dbReference type="ChEBI" id="CHEBI:57540"/>
    </ligand>
</feature>
<feature type="binding site" evidence="1">
    <location>
        <begin position="288"/>
        <end position="289"/>
    </location>
    <ligand>
        <name>NAD(+)</name>
        <dbReference type="ChEBI" id="CHEBI:57540"/>
    </ligand>
</feature>
<feature type="site" description="Important for catalytic activity for the proton relay mechanism but does not participate directly in the coordination of zinc atom" evidence="1">
    <location>
        <position position="150"/>
    </location>
</feature>
<name>TDH_ALIFM</name>
<protein>
    <recommendedName>
        <fullName evidence="1">L-threonine 3-dehydrogenase</fullName>
        <shortName evidence="1">TDH</shortName>
        <ecNumber evidence="1">1.1.1.103</ecNumber>
    </recommendedName>
</protein>
<gene>
    <name evidence="1" type="primary">tdh</name>
    <name type="ordered locus">VFMJ11_A0460</name>
</gene>
<comment type="function">
    <text evidence="1">Catalyzes the NAD(+)-dependent oxidation of L-threonine to 2-amino-3-ketobutyrate.</text>
</comment>
<comment type="catalytic activity">
    <reaction evidence="1">
        <text>L-threonine + NAD(+) = (2S)-2-amino-3-oxobutanoate + NADH + H(+)</text>
        <dbReference type="Rhea" id="RHEA:13161"/>
        <dbReference type="ChEBI" id="CHEBI:15378"/>
        <dbReference type="ChEBI" id="CHEBI:57540"/>
        <dbReference type="ChEBI" id="CHEBI:57926"/>
        <dbReference type="ChEBI" id="CHEBI:57945"/>
        <dbReference type="ChEBI" id="CHEBI:78948"/>
        <dbReference type="EC" id="1.1.1.103"/>
    </reaction>
</comment>
<comment type="cofactor">
    <cofactor evidence="1">
        <name>Zn(2+)</name>
        <dbReference type="ChEBI" id="CHEBI:29105"/>
    </cofactor>
    <text evidence="1">Binds 2 Zn(2+) ions per subunit.</text>
</comment>
<comment type="pathway">
    <text evidence="1">Amino-acid degradation; L-threonine degradation via oxydo-reductase pathway; glycine from L-threonine: step 1/2.</text>
</comment>
<comment type="subunit">
    <text evidence="1">Homotetramer.</text>
</comment>
<comment type="subcellular location">
    <subcellularLocation>
        <location evidence="1">Cytoplasm</location>
    </subcellularLocation>
</comment>
<comment type="similarity">
    <text evidence="1">Belongs to the zinc-containing alcohol dehydrogenase family.</text>
</comment>
<sequence length="343" mass="37657">MKIKALSKLKPEEGIWLTEVEKPEMGHNDLLIRIKKTAICGTDVHIYNWDEWSQKTIPVPMVVGHEYVGEVVGIGQEVRGFEIGDRVSGEGHITCGHCRNCRGGRTHLCRNTTGVGVNRTGAFSEYLVIPAFNAFKIPAGISDDLASIFDPFGNAVHTALSFDLVGEDVLITGAGPIGIMAAAVAKHVGARHVVITDVNEYRLDLAKKMGVTRAVNVMNEKLEDVMSDLGMTEGFDVGLEMSGNPSAFNSMLTNMNHGGKISLLGIPPSDMTVDWNQVIFKGLVIKGIYGREMFETWYKMASLIQSGLDLTPIITHHYKIDDFQKGFDMMRSGMSGKVILDWE</sequence>